<sequence>MSTTIAVNGNHYQQLHQGRTSMYKSKVDVVLGAQWGDEGKGKVVDMLASEVDIVCRCQGGNNAGHTVVANGTEFDFHLLPSGVVNEKCISVIGNGVVIHLPSLFDEVLKNEAKGLQHLENRLIISDRAHLVFDFHQHVDGMQEAEKGGKSLGTTKKGIGPAYSSKATRNGIRVGELLGDFNLFSEKFKSIVNTHLRLFPSIKVDVDAELARYKDYVDKVRPYVKDTICFLHTALRNGKTILVEGANAAMLDIDFGTYPYVTSSNCSIGGVLTGLGLPPQTIGEVIGVVKAYTTRVGDGPFPTEQLNEIGDLLQTRGFEVGVTTKRKRRCGWLDIPLLKYTSLVNGYTCICITKLDILDTLPEIKVGVSYKRSSGDKLDHFPGTISELSDIEVEYAVLPGWQTSTEHIRNFKELPENAQNYVRFLESQLSVPVRWVGVGKGRESIINVH</sequence>
<protein>
    <recommendedName>
        <fullName evidence="2">Adenylosuccinate synthetase</fullName>
        <shortName evidence="2">AMPSase</shortName>
        <shortName evidence="2">AdSS</shortName>
        <ecNumber evidence="2">6.3.4.4</ecNumber>
    </recommendedName>
    <alternativeName>
        <fullName evidence="2">IMP--aspartate ligase</fullName>
    </alternativeName>
</protein>
<accession>B4LWK0</accession>
<organism>
    <name type="scientific">Drosophila virilis</name>
    <name type="common">Fruit fly</name>
    <dbReference type="NCBI Taxonomy" id="7244"/>
    <lineage>
        <taxon>Eukaryota</taxon>
        <taxon>Metazoa</taxon>
        <taxon>Ecdysozoa</taxon>
        <taxon>Arthropoda</taxon>
        <taxon>Hexapoda</taxon>
        <taxon>Insecta</taxon>
        <taxon>Pterygota</taxon>
        <taxon>Neoptera</taxon>
        <taxon>Endopterygota</taxon>
        <taxon>Diptera</taxon>
        <taxon>Brachycera</taxon>
        <taxon>Muscomorpha</taxon>
        <taxon>Ephydroidea</taxon>
        <taxon>Drosophilidae</taxon>
        <taxon>Drosophila</taxon>
    </lineage>
</organism>
<name>PURA_DROVI</name>
<dbReference type="EC" id="6.3.4.4" evidence="2"/>
<dbReference type="EMBL" id="CH940650">
    <property type="protein sequence ID" value="EDW67665.1"/>
    <property type="molecule type" value="Genomic_DNA"/>
</dbReference>
<dbReference type="SMR" id="B4LWK0"/>
<dbReference type="FunCoup" id="B4LWK0">
    <property type="interactions" value="1474"/>
</dbReference>
<dbReference type="STRING" id="7244.B4LWK0"/>
<dbReference type="EnsemblMetazoa" id="FBtr0240196">
    <property type="protein sequence ID" value="FBpp0238688"/>
    <property type="gene ID" value="FBgn0211351"/>
</dbReference>
<dbReference type="EnsemblMetazoa" id="XM_002054109.3">
    <property type="protein sequence ID" value="XP_002054145.1"/>
    <property type="gene ID" value="LOC6629741"/>
</dbReference>
<dbReference type="GeneID" id="6629741"/>
<dbReference type="KEGG" id="dvi:6629741"/>
<dbReference type="CTD" id="42466"/>
<dbReference type="eggNOG" id="KOG1355">
    <property type="taxonomic scope" value="Eukaryota"/>
</dbReference>
<dbReference type="HOGENOM" id="CLU_029848_0_0_1"/>
<dbReference type="InParanoid" id="B4LWK0"/>
<dbReference type="OMA" id="QSYVRFL"/>
<dbReference type="OrthoDB" id="10265645at2759"/>
<dbReference type="PhylomeDB" id="B4LWK0"/>
<dbReference type="UniPathway" id="UPA00075">
    <property type="reaction ID" value="UER00335"/>
</dbReference>
<dbReference type="Proteomes" id="UP000008792">
    <property type="component" value="Unassembled WGS sequence"/>
</dbReference>
<dbReference type="GO" id="GO:0005737">
    <property type="term" value="C:cytoplasm"/>
    <property type="evidence" value="ECO:0007669"/>
    <property type="project" value="UniProtKB-SubCell"/>
</dbReference>
<dbReference type="GO" id="GO:0004019">
    <property type="term" value="F:adenylosuccinate synthase activity"/>
    <property type="evidence" value="ECO:0007669"/>
    <property type="project" value="UniProtKB-UniRule"/>
</dbReference>
<dbReference type="GO" id="GO:0005525">
    <property type="term" value="F:GTP binding"/>
    <property type="evidence" value="ECO:0007669"/>
    <property type="project" value="UniProtKB-UniRule"/>
</dbReference>
<dbReference type="GO" id="GO:0000287">
    <property type="term" value="F:magnesium ion binding"/>
    <property type="evidence" value="ECO:0007669"/>
    <property type="project" value="UniProtKB-UniRule"/>
</dbReference>
<dbReference type="GO" id="GO:0044208">
    <property type="term" value="P:'de novo' AMP biosynthetic process"/>
    <property type="evidence" value="ECO:0007669"/>
    <property type="project" value="UniProtKB-UniRule"/>
</dbReference>
<dbReference type="GO" id="GO:0046040">
    <property type="term" value="P:IMP metabolic process"/>
    <property type="evidence" value="ECO:0007669"/>
    <property type="project" value="TreeGrafter"/>
</dbReference>
<dbReference type="CDD" id="cd03108">
    <property type="entry name" value="AdSS"/>
    <property type="match status" value="1"/>
</dbReference>
<dbReference type="FunFam" id="3.90.170.10:FF:000001">
    <property type="entry name" value="Adenylosuccinate synthetase"/>
    <property type="match status" value="1"/>
</dbReference>
<dbReference type="FunFam" id="1.10.300.10:FF:000002">
    <property type="entry name" value="Adenylosuccinate synthetase, chloroplastic"/>
    <property type="match status" value="1"/>
</dbReference>
<dbReference type="Gene3D" id="3.40.440.10">
    <property type="entry name" value="Adenylosuccinate Synthetase, subunit A, domain 1"/>
    <property type="match status" value="1"/>
</dbReference>
<dbReference type="Gene3D" id="1.10.300.10">
    <property type="entry name" value="Adenylosuccinate Synthetase, subunit A, domain 2"/>
    <property type="match status" value="1"/>
</dbReference>
<dbReference type="Gene3D" id="3.90.170.10">
    <property type="entry name" value="Adenylosuccinate Synthetase, subunit A, domain 3"/>
    <property type="match status" value="1"/>
</dbReference>
<dbReference type="HAMAP" id="MF_00011">
    <property type="entry name" value="Adenylosucc_synth"/>
    <property type="match status" value="1"/>
</dbReference>
<dbReference type="InterPro" id="IPR018220">
    <property type="entry name" value="Adenylosuccin_syn_GTP-bd"/>
</dbReference>
<dbReference type="InterPro" id="IPR033128">
    <property type="entry name" value="Adenylosuccin_syn_Lys_AS"/>
</dbReference>
<dbReference type="InterPro" id="IPR042109">
    <property type="entry name" value="Adenylosuccinate_synth_dom1"/>
</dbReference>
<dbReference type="InterPro" id="IPR042110">
    <property type="entry name" value="Adenylosuccinate_synth_dom2"/>
</dbReference>
<dbReference type="InterPro" id="IPR042111">
    <property type="entry name" value="Adenylosuccinate_synth_dom3"/>
</dbReference>
<dbReference type="InterPro" id="IPR001114">
    <property type="entry name" value="Adenylosuccinate_synthetase"/>
</dbReference>
<dbReference type="InterPro" id="IPR027417">
    <property type="entry name" value="P-loop_NTPase"/>
</dbReference>
<dbReference type="NCBIfam" id="NF002223">
    <property type="entry name" value="PRK01117.1"/>
    <property type="match status" value="1"/>
</dbReference>
<dbReference type="NCBIfam" id="TIGR00184">
    <property type="entry name" value="purA"/>
    <property type="match status" value="1"/>
</dbReference>
<dbReference type="PANTHER" id="PTHR11846">
    <property type="entry name" value="ADENYLOSUCCINATE SYNTHETASE"/>
    <property type="match status" value="1"/>
</dbReference>
<dbReference type="PANTHER" id="PTHR11846:SF0">
    <property type="entry name" value="ADENYLOSUCCINATE SYNTHETASE"/>
    <property type="match status" value="1"/>
</dbReference>
<dbReference type="Pfam" id="PF00709">
    <property type="entry name" value="Adenylsucc_synt"/>
    <property type="match status" value="1"/>
</dbReference>
<dbReference type="SMART" id="SM00788">
    <property type="entry name" value="Adenylsucc_synt"/>
    <property type="match status" value="1"/>
</dbReference>
<dbReference type="SUPFAM" id="SSF52540">
    <property type="entry name" value="P-loop containing nucleoside triphosphate hydrolases"/>
    <property type="match status" value="1"/>
</dbReference>
<dbReference type="PROSITE" id="PS01266">
    <property type="entry name" value="ADENYLOSUCCIN_SYN_1"/>
    <property type="match status" value="1"/>
</dbReference>
<dbReference type="PROSITE" id="PS00513">
    <property type="entry name" value="ADENYLOSUCCIN_SYN_2"/>
    <property type="match status" value="1"/>
</dbReference>
<evidence type="ECO:0000250" key="1"/>
<evidence type="ECO:0000255" key="2">
    <source>
        <dbReference type="HAMAP-Rule" id="MF_03125"/>
    </source>
</evidence>
<proteinExistence type="inferred from homology"/>
<comment type="function">
    <text evidence="1">Plays an important role in the de novo pathway and in the salvage pathway of purine nucleotide biosynthesis. Catalyzes the first committed step in the biosynthesis of AMP from IMP (By similarity).</text>
</comment>
<comment type="catalytic activity">
    <reaction evidence="2">
        <text>IMP + L-aspartate + GTP = N(6)-(1,2-dicarboxyethyl)-AMP + GDP + phosphate + 2 H(+)</text>
        <dbReference type="Rhea" id="RHEA:15753"/>
        <dbReference type="ChEBI" id="CHEBI:15378"/>
        <dbReference type="ChEBI" id="CHEBI:29991"/>
        <dbReference type="ChEBI" id="CHEBI:37565"/>
        <dbReference type="ChEBI" id="CHEBI:43474"/>
        <dbReference type="ChEBI" id="CHEBI:57567"/>
        <dbReference type="ChEBI" id="CHEBI:58053"/>
        <dbReference type="ChEBI" id="CHEBI:58189"/>
        <dbReference type="EC" id="6.3.4.4"/>
    </reaction>
</comment>
<comment type="cofactor">
    <cofactor evidence="2">
        <name>Mg(2+)</name>
        <dbReference type="ChEBI" id="CHEBI:18420"/>
    </cofactor>
    <text evidence="2">Binds 1 Mg(2+) ion per subunit.</text>
</comment>
<comment type="pathway">
    <text evidence="2">Purine metabolism; AMP biosynthesis via de novo pathway; AMP from IMP: step 1/2.</text>
</comment>
<comment type="subunit">
    <text evidence="2">Homodimer.</text>
</comment>
<comment type="subcellular location">
    <subcellularLocation>
        <location evidence="2">Cytoplasm</location>
    </subcellularLocation>
</comment>
<comment type="similarity">
    <text evidence="2">Belongs to the adenylosuccinate synthetase family.</text>
</comment>
<keyword id="KW-0963">Cytoplasm</keyword>
<keyword id="KW-0342">GTP-binding</keyword>
<keyword id="KW-0436">Ligase</keyword>
<keyword id="KW-0460">Magnesium</keyword>
<keyword id="KW-0479">Metal-binding</keyword>
<keyword id="KW-0547">Nucleotide-binding</keyword>
<keyword id="KW-0658">Purine biosynthesis</keyword>
<keyword id="KW-1185">Reference proteome</keyword>
<feature type="chain" id="PRO_0000399265" description="Adenylosuccinate synthetase">
    <location>
        <begin position="1"/>
        <end position="448"/>
    </location>
</feature>
<feature type="active site" description="Proton acceptor" evidence="2">
    <location>
        <position position="37"/>
    </location>
</feature>
<feature type="active site" description="Proton donor" evidence="2">
    <location>
        <position position="65"/>
    </location>
</feature>
<feature type="binding site" evidence="2">
    <location>
        <begin position="36"/>
        <end position="42"/>
    </location>
    <ligand>
        <name>GTP</name>
        <dbReference type="ChEBI" id="CHEBI:37565"/>
    </ligand>
</feature>
<feature type="binding site" description="in other chain" evidence="2">
    <location>
        <begin position="37"/>
        <end position="40"/>
    </location>
    <ligand>
        <name>IMP</name>
        <dbReference type="ChEBI" id="CHEBI:58053"/>
        <note>ligand shared between dimeric partners</note>
    </ligand>
</feature>
<feature type="binding site" evidence="2">
    <location>
        <position position="37"/>
    </location>
    <ligand>
        <name>Mg(2+)</name>
        <dbReference type="ChEBI" id="CHEBI:18420"/>
    </ligand>
</feature>
<feature type="binding site" description="in other chain" evidence="2">
    <location>
        <begin position="62"/>
        <end position="65"/>
    </location>
    <ligand>
        <name>IMP</name>
        <dbReference type="ChEBI" id="CHEBI:58053"/>
        <note>ligand shared between dimeric partners</note>
    </ligand>
</feature>
<feature type="binding site" evidence="2">
    <location>
        <begin position="64"/>
        <end position="66"/>
    </location>
    <ligand>
        <name>GTP</name>
        <dbReference type="ChEBI" id="CHEBI:37565"/>
    </ligand>
</feature>
<feature type="binding site" evidence="2">
    <location>
        <position position="64"/>
    </location>
    <ligand>
        <name>Mg(2+)</name>
        <dbReference type="ChEBI" id="CHEBI:18420"/>
    </ligand>
</feature>
<feature type="binding site" description="in other chain" evidence="2">
    <location>
        <position position="154"/>
    </location>
    <ligand>
        <name>IMP</name>
        <dbReference type="ChEBI" id="CHEBI:58053"/>
        <note>ligand shared between dimeric partners</note>
    </ligand>
</feature>
<feature type="binding site" evidence="2">
    <location>
        <position position="168"/>
    </location>
    <ligand>
        <name>IMP</name>
        <dbReference type="ChEBI" id="CHEBI:58053"/>
        <note>ligand shared between dimeric partners</note>
    </ligand>
</feature>
<feature type="binding site" description="in other chain" evidence="2">
    <location>
        <position position="246"/>
    </location>
    <ligand>
        <name>IMP</name>
        <dbReference type="ChEBI" id="CHEBI:58053"/>
        <note>ligand shared between dimeric partners</note>
    </ligand>
</feature>
<feature type="binding site" description="in other chain" evidence="2">
    <location>
        <position position="261"/>
    </location>
    <ligand>
        <name>IMP</name>
        <dbReference type="ChEBI" id="CHEBI:58053"/>
        <note>ligand shared between dimeric partners</note>
    </ligand>
</feature>
<feature type="binding site" evidence="2">
    <location>
        <begin position="321"/>
        <end position="327"/>
    </location>
    <ligand>
        <name>substrate</name>
    </ligand>
</feature>
<feature type="binding site" description="in other chain" evidence="2">
    <location>
        <position position="325"/>
    </location>
    <ligand>
        <name>IMP</name>
        <dbReference type="ChEBI" id="CHEBI:58053"/>
        <note>ligand shared between dimeric partners</note>
    </ligand>
</feature>
<feature type="binding site" evidence="2">
    <location>
        <position position="327"/>
    </location>
    <ligand>
        <name>GTP</name>
        <dbReference type="ChEBI" id="CHEBI:37565"/>
    </ligand>
</feature>
<feature type="binding site" evidence="2">
    <location>
        <begin position="353"/>
        <end position="355"/>
    </location>
    <ligand>
        <name>GTP</name>
        <dbReference type="ChEBI" id="CHEBI:37565"/>
    </ligand>
</feature>
<feature type="binding site" evidence="2">
    <location>
        <begin position="436"/>
        <end position="438"/>
    </location>
    <ligand>
        <name>GTP</name>
        <dbReference type="ChEBI" id="CHEBI:37565"/>
    </ligand>
</feature>
<gene>
    <name type="ORF">GJ24271</name>
</gene>
<reference key="1">
    <citation type="journal article" date="2007" name="Nature">
        <title>Evolution of genes and genomes on the Drosophila phylogeny.</title>
        <authorList>
            <consortium name="Drosophila 12 genomes consortium"/>
        </authorList>
    </citation>
    <scope>NUCLEOTIDE SEQUENCE [LARGE SCALE GENOMIC DNA]</scope>
    <source>
        <strain>Tucson 15010-1051.87</strain>
    </source>
</reference>